<name>OTP_PARLI</name>
<gene>
    <name type="primary">OTP</name>
</gene>
<dbReference type="EMBL" id="AJ007501">
    <property type="protein sequence ID" value="CAA07543.1"/>
    <property type="molecule type" value="mRNA"/>
</dbReference>
<dbReference type="SMR" id="O76971"/>
<dbReference type="GO" id="GO:0005634">
    <property type="term" value="C:nucleus"/>
    <property type="evidence" value="ECO:0007669"/>
    <property type="project" value="UniProtKB-SubCell"/>
</dbReference>
<dbReference type="GO" id="GO:0003677">
    <property type="term" value="F:DNA binding"/>
    <property type="evidence" value="ECO:0007669"/>
    <property type="project" value="UniProtKB-KW"/>
</dbReference>
<dbReference type="GO" id="GO:0000981">
    <property type="term" value="F:DNA-binding transcription factor activity, RNA polymerase II-specific"/>
    <property type="evidence" value="ECO:0007669"/>
    <property type="project" value="InterPro"/>
</dbReference>
<dbReference type="GO" id="GO:0030182">
    <property type="term" value="P:neuron differentiation"/>
    <property type="evidence" value="ECO:0007669"/>
    <property type="project" value="TreeGrafter"/>
</dbReference>
<dbReference type="CDD" id="cd00086">
    <property type="entry name" value="homeodomain"/>
    <property type="match status" value="1"/>
</dbReference>
<dbReference type="FunFam" id="1.10.10.60:FF:000719">
    <property type="entry name" value="Homeobox protein orthopedia-like Protein"/>
    <property type="match status" value="1"/>
</dbReference>
<dbReference type="Gene3D" id="1.10.10.60">
    <property type="entry name" value="Homeodomain-like"/>
    <property type="match status" value="1"/>
</dbReference>
<dbReference type="InterPro" id="IPR001356">
    <property type="entry name" value="HD"/>
</dbReference>
<dbReference type="InterPro" id="IPR017970">
    <property type="entry name" value="Homeobox_CS"/>
</dbReference>
<dbReference type="InterPro" id="IPR009057">
    <property type="entry name" value="Homeodomain-like_sf"/>
</dbReference>
<dbReference type="InterPro" id="IPR000047">
    <property type="entry name" value="HTH_motif"/>
</dbReference>
<dbReference type="InterPro" id="IPR003654">
    <property type="entry name" value="OAR_dom"/>
</dbReference>
<dbReference type="InterPro" id="IPR051895">
    <property type="entry name" value="OTP_Homeobox"/>
</dbReference>
<dbReference type="PANTHER" id="PTHR46770">
    <property type="entry name" value="HOMEOBOX PROTEIN ORTHOPEDIA"/>
    <property type="match status" value="1"/>
</dbReference>
<dbReference type="PANTHER" id="PTHR46770:SF1">
    <property type="entry name" value="HOMEOBOX PROTEIN ORTHOPEDIA"/>
    <property type="match status" value="1"/>
</dbReference>
<dbReference type="Pfam" id="PF00046">
    <property type="entry name" value="Homeodomain"/>
    <property type="match status" value="1"/>
</dbReference>
<dbReference type="Pfam" id="PF03826">
    <property type="entry name" value="OAR"/>
    <property type="match status" value="1"/>
</dbReference>
<dbReference type="PRINTS" id="PR00031">
    <property type="entry name" value="HTHREPRESSR"/>
</dbReference>
<dbReference type="SMART" id="SM00389">
    <property type="entry name" value="HOX"/>
    <property type="match status" value="1"/>
</dbReference>
<dbReference type="SUPFAM" id="SSF46689">
    <property type="entry name" value="Homeodomain-like"/>
    <property type="match status" value="1"/>
</dbReference>
<dbReference type="PROSITE" id="PS00027">
    <property type="entry name" value="HOMEOBOX_1"/>
    <property type="match status" value="1"/>
</dbReference>
<dbReference type="PROSITE" id="PS50071">
    <property type="entry name" value="HOMEOBOX_2"/>
    <property type="match status" value="1"/>
</dbReference>
<dbReference type="PROSITE" id="PS50803">
    <property type="entry name" value="OAR"/>
    <property type="match status" value="1"/>
</dbReference>
<feature type="chain" id="PRO_0000049205" description="Homeobox protein orthopedia">
    <location>
        <begin position="1"/>
        <end position="364"/>
    </location>
</feature>
<feature type="DNA-binding region" description="Homeobox" evidence="1">
    <location>
        <begin position="116"/>
        <end position="175"/>
    </location>
</feature>
<feature type="region of interest" description="Disordered" evidence="3">
    <location>
        <begin position="35"/>
        <end position="120"/>
    </location>
</feature>
<feature type="region of interest" description="Disordered" evidence="3">
    <location>
        <begin position="303"/>
        <end position="330"/>
    </location>
</feature>
<feature type="short sequence motif" description="OAR" evidence="2">
    <location>
        <begin position="344"/>
        <end position="357"/>
    </location>
</feature>
<feature type="compositionally biased region" description="Gly residues" evidence="3">
    <location>
        <begin position="69"/>
        <end position="99"/>
    </location>
</feature>
<feature type="compositionally biased region" description="Low complexity" evidence="3">
    <location>
        <begin position="303"/>
        <end position="315"/>
    </location>
</feature>
<keyword id="KW-0217">Developmental protein</keyword>
<keyword id="KW-0238">DNA-binding</keyword>
<keyword id="KW-0371">Homeobox</keyword>
<keyword id="KW-0539">Nucleus</keyword>
<keyword id="KW-0804">Transcription</keyword>
<keyword id="KW-0805">Transcription regulation</keyword>
<evidence type="ECO:0000255" key="1">
    <source>
        <dbReference type="PROSITE-ProRule" id="PRU00108"/>
    </source>
</evidence>
<evidence type="ECO:0000255" key="2">
    <source>
        <dbReference type="PROSITE-ProRule" id="PRU00138"/>
    </source>
</evidence>
<evidence type="ECO:0000256" key="3">
    <source>
        <dbReference type="SAM" id="MobiDB-lite"/>
    </source>
</evidence>
<evidence type="ECO:0000269" key="4">
    <source>
    </source>
</evidence>
<evidence type="ECO:0000269" key="5">
    <source>
    </source>
</evidence>
<evidence type="ECO:0000305" key="6"/>
<sequence>MERTLAHVPSMELSTEALLVTGGLDNTNKMISSSAVRNDDGTMISQHSDKVSYGTSGAPDGSTPPYPAGGVGEGNGIVGGGGGGGGGGGGGMVGDGTGHSVGSSGSGNDDDKPAKQKRHRTRFTPAQLNELERNFAKTHYPDIFMREEIAMRVGLTESRVQVWFQNRRAKWKKRKKTTNVFRTPGALLPSHGLAQFPSPMNDSFCNFHGQDTRGWPAMSGMTTHMAPHMTTHMPSHQMPLMGGGPGSALALPPSLPRQGLGQSMQQQSVNCSMGQTTGLNTLSMGTNGSMGSMTSMYQPSLGGMTTGSMSSGLSSPSPPNLPVTDSSTDLSCSVSDAGDMWRGTSIASLRRKLEHAASLNGIFR</sequence>
<comment type="function">
    <text evidence="4 5">Involved in larval skeletal patterning.</text>
</comment>
<comment type="subcellular location">
    <subcellularLocation>
        <location evidence="1 2">Nucleus</location>
    </subcellularLocation>
</comment>
<comment type="tissue specificity">
    <text evidence="4">Expressed at low levels in lantern and tubefeet.</text>
</comment>
<comment type="developmental stage">
    <text evidence="4">Expression starts at the gastrula stage, increases at the prism stage and peaks at the puteus larva stage. Expression is restricted to the oral epithelium.</text>
</comment>
<comment type="similarity">
    <text evidence="6">Belongs to the paired homeobox family. Bicoid subfamily.</text>
</comment>
<proteinExistence type="evidence at transcript level"/>
<reference key="1">
    <citation type="journal article" date="1999" name="Development">
        <title>Spatially restricted expression of PlOtp, a Paracentrotus lividus orthopedia-related homeobox gene, is correlated with oral ectodermal patterning and skeletal morphogenesis in late-cleavage sea urchin embryos.</title>
        <authorList>
            <person name="Di Bernardo M."/>
            <person name="Castagnetti S."/>
            <person name="Bellomonte D."/>
            <person name="Oliveri P."/>
            <person name="Melfi R."/>
            <person name="Palla F."/>
            <person name="Spinelli G."/>
        </authorList>
    </citation>
    <scope>NUCLEOTIDE SEQUENCE [MRNA]</scope>
    <scope>TISSUE SPECIFICITY</scope>
    <scope>DEVELOPMENTAL STAGE</scope>
    <scope>FUNCTION</scope>
</reference>
<reference key="2">
    <citation type="journal article" date="2003" name="Dev. Biol.">
        <title>Impairing Otp homeodomain function in oral ectoderm cells affects skeletogenesis in sea urchin embryos.</title>
        <authorList>
            <person name="Cavalieri V."/>
            <person name="Spinelli G."/>
            <person name="Di Bernardo M."/>
        </authorList>
    </citation>
    <scope>FUNCTION</scope>
</reference>
<organism>
    <name type="scientific">Paracentrotus lividus</name>
    <name type="common">Common sea urchin</name>
    <dbReference type="NCBI Taxonomy" id="7656"/>
    <lineage>
        <taxon>Eukaryota</taxon>
        <taxon>Metazoa</taxon>
        <taxon>Echinodermata</taxon>
        <taxon>Eleutherozoa</taxon>
        <taxon>Echinozoa</taxon>
        <taxon>Echinoidea</taxon>
        <taxon>Euechinoidea</taxon>
        <taxon>Echinacea</taxon>
        <taxon>Camarodonta</taxon>
        <taxon>Echinidea</taxon>
        <taxon>Echinidae</taxon>
        <taxon>Paracentrotus</taxon>
    </lineage>
</organism>
<protein>
    <recommendedName>
        <fullName>Homeobox protein orthopedia</fullName>
    </recommendedName>
    <alternativeName>
        <fullName>Orthopedia-related</fullName>
    </alternativeName>
    <alternativeName>
        <fullName>PlOtp</fullName>
    </alternativeName>
</protein>
<accession>O76971</accession>